<gene>
    <name evidence="1" type="primary">pgi</name>
    <name type="ordered locus">lin2466</name>
</gene>
<dbReference type="EC" id="5.3.1.9" evidence="1"/>
<dbReference type="EMBL" id="AL596172">
    <property type="protein sequence ID" value="CAC97693.1"/>
    <property type="molecule type" value="Genomic_DNA"/>
</dbReference>
<dbReference type="PIR" id="AE1740">
    <property type="entry name" value="AE1740"/>
</dbReference>
<dbReference type="RefSeq" id="WP_003728418.1">
    <property type="nucleotide sequence ID" value="NC_003212.1"/>
</dbReference>
<dbReference type="SMR" id="Q928R6"/>
<dbReference type="STRING" id="272626.gene:17566846"/>
<dbReference type="KEGG" id="lin:pgi"/>
<dbReference type="eggNOG" id="COG0166">
    <property type="taxonomic scope" value="Bacteria"/>
</dbReference>
<dbReference type="HOGENOM" id="CLU_037303_0_1_9"/>
<dbReference type="OrthoDB" id="140919at2"/>
<dbReference type="UniPathway" id="UPA00109">
    <property type="reaction ID" value="UER00181"/>
</dbReference>
<dbReference type="UniPathway" id="UPA00138"/>
<dbReference type="Proteomes" id="UP000002513">
    <property type="component" value="Chromosome"/>
</dbReference>
<dbReference type="GO" id="GO:0005829">
    <property type="term" value="C:cytosol"/>
    <property type="evidence" value="ECO:0007669"/>
    <property type="project" value="TreeGrafter"/>
</dbReference>
<dbReference type="GO" id="GO:0097367">
    <property type="term" value="F:carbohydrate derivative binding"/>
    <property type="evidence" value="ECO:0007669"/>
    <property type="project" value="InterPro"/>
</dbReference>
<dbReference type="GO" id="GO:0004347">
    <property type="term" value="F:glucose-6-phosphate isomerase activity"/>
    <property type="evidence" value="ECO:0007669"/>
    <property type="project" value="UniProtKB-UniRule"/>
</dbReference>
<dbReference type="GO" id="GO:0048029">
    <property type="term" value="F:monosaccharide binding"/>
    <property type="evidence" value="ECO:0007669"/>
    <property type="project" value="TreeGrafter"/>
</dbReference>
<dbReference type="GO" id="GO:0006094">
    <property type="term" value="P:gluconeogenesis"/>
    <property type="evidence" value="ECO:0007669"/>
    <property type="project" value="UniProtKB-UniRule"/>
</dbReference>
<dbReference type="GO" id="GO:0051156">
    <property type="term" value="P:glucose 6-phosphate metabolic process"/>
    <property type="evidence" value="ECO:0007669"/>
    <property type="project" value="TreeGrafter"/>
</dbReference>
<dbReference type="GO" id="GO:0006096">
    <property type="term" value="P:glycolytic process"/>
    <property type="evidence" value="ECO:0007669"/>
    <property type="project" value="UniProtKB-UniRule"/>
</dbReference>
<dbReference type="CDD" id="cd05015">
    <property type="entry name" value="SIS_PGI_1"/>
    <property type="match status" value="1"/>
</dbReference>
<dbReference type="CDD" id="cd05016">
    <property type="entry name" value="SIS_PGI_2"/>
    <property type="match status" value="1"/>
</dbReference>
<dbReference type="FunFam" id="3.40.50.10490:FF:000015">
    <property type="entry name" value="Glucose-6-phosphate isomerase"/>
    <property type="match status" value="1"/>
</dbReference>
<dbReference type="FunFam" id="3.40.50.10490:FF:000016">
    <property type="entry name" value="Glucose-6-phosphate isomerase"/>
    <property type="match status" value="1"/>
</dbReference>
<dbReference type="Gene3D" id="3.40.50.10490">
    <property type="entry name" value="Glucose-6-phosphate isomerase like protein, domain 1"/>
    <property type="match status" value="3"/>
</dbReference>
<dbReference type="HAMAP" id="MF_00473">
    <property type="entry name" value="G6P_isomerase"/>
    <property type="match status" value="1"/>
</dbReference>
<dbReference type="InterPro" id="IPR001672">
    <property type="entry name" value="G6P_Isomerase"/>
</dbReference>
<dbReference type="InterPro" id="IPR018189">
    <property type="entry name" value="Phosphoglucose_isomerase_CS"/>
</dbReference>
<dbReference type="InterPro" id="IPR046348">
    <property type="entry name" value="SIS_dom_sf"/>
</dbReference>
<dbReference type="InterPro" id="IPR035476">
    <property type="entry name" value="SIS_PGI_1"/>
</dbReference>
<dbReference type="InterPro" id="IPR035482">
    <property type="entry name" value="SIS_PGI_2"/>
</dbReference>
<dbReference type="NCBIfam" id="NF010697">
    <property type="entry name" value="PRK14097.1"/>
    <property type="match status" value="1"/>
</dbReference>
<dbReference type="PANTHER" id="PTHR11469">
    <property type="entry name" value="GLUCOSE-6-PHOSPHATE ISOMERASE"/>
    <property type="match status" value="1"/>
</dbReference>
<dbReference type="PANTHER" id="PTHR11469:SF1">
    <property type="entry name" value="GLUCOSE-6-PHOSPHATE ISOMERASE"/>
    <property type="match status" value="1"/>
</dbReference>
<dbReference type="Pfam" id="PF00342">
    <property type="entry name" value="PGI"/>
    <property type="match status" value="1"/>
</dbReference>
<dbReference type="PRINTS" id="PR00662">
    <property type="entry name" value="G6PISOMERASE"/>
</dbReference>
<dbReference type="SUPFAM" id="SSF53697">
    <property type="entry name" value="SIS domain"/>
    <property type="match status" value="1"/>
</dbReference>
<dbReference type="PROSITE" id="PS00765">
    <property type="entry name" value="P_GLUCOSE_ISOMERASE_1"/>
    <property type="match status" value="1"/>
</dbReference>
<dbReference type="PROSITE" id="PS00174">
    <property type="entry name" value="P_GLUCOSE_ISOMERASE_2"/>
    <property type="match status" value="1"/>
</dbReference>
<dbReference type="PROSITE" id="PS51463">
    <property type="entry name" value="P_GLUCOSE_ISOMERASE_3"/>
    <property type="match status" value="1"/>
</dbReference>
<comment type="function">
    <text evidence="1">Catalyzes the reversible isomerization of glucose-6-phosphate to fructose-6-phosphate.</text>
</comment>
<comment type="catalytic activity">
    <reaction evidence="1">
        <text>alpha-D-glucose 6-phosphate = beta-D-fructose 6-phosphate</text>
        <dbReference type="Rhea" id="RHEA:11816"/>
        <dbReference type="ChEBI" id="CHEBI:57634"/>
        <dbReference type="ChEBI" id="CHEBI:58225"/>
        <dbReference type="EC" id="5.3.1.9"/>
    </reaction>
</comment>
<comment type="pathway">
    <text evidence="1">Carbohydrate biosynthesis; gluconeogenesis.</text>
</comment>
<comment type="pathway">
    <text evidence="1">Carbohydrate degradation; glycolysis; D-glyceraldehyde 3-phosphate and glycerone phosphate from D-glucose: step 2/4.</text>
</comment>
<comment type="subcellular location">
    <subcellularLocation>
        <location evidence="1">Cytoplasm</location>
    </subcellularLocation>
</comment>
<comment type="similarity">
    <text evidence="1">Belongs to the GPI family.</text>
</comment>
<protein>
    <recommendedName>
        <fullName evidence="1">Glucose-6-phosphate isomerase</fullName>
        <shortName evidence="1">GPI</shortName>
        <ecNumber evidence="1">5.3.1.9</ecNumber>
    </recommendedName>
    <alternativeName>
        <fullName evidence="1">Phosphoglucose isomerase</fullName>
        <shortName evidence="1">PGI</shortName>
    </alternativeName>
    <alternativeName>
        <fullName evidence="1">Phosphohexose isomerase</fullName>
        <shortName evidence="1">PHI</shortName>
    </alternativeName>
</protein>
<accession>Q928R6</accession>
<organism>
    <name type="scientific">Listeria innocua serovar 6a (strain ATCC BAA-680 / CLIP 11262)</name>
    <dbReference type="NCBI Taxonomy" id="272626"/>
    <lineage>
        <taxon>Bacteria</taxon>
        <taxon>Bacillati</taxon>
        <taxon>Bacillota</taxon>
        <taxon>Bacilli</taxon>
        <taxon>Bacillales</taxon>
        <taxon>Listeriaceae</taxon>
        <taxon>Listeria</taxon>
    </lineage>
</organism>
<feature type="chain" id="PRO_0000180667" description="Glucose-6-phosphate isomerase">
    <location>
        <begin position="1"/>
        <end position="450"/>
    </location>
</feature>
<feature type="active site" description="Proton donor" evidence="1">
    <location>
        <position position="290"/>
    </location>
</feature>
<feature type="active site" evidence="1">
    <location>
        <position position="311"/>
    </location>
</feature>
<feature type="active site" evidence="1">
    <location>
        <position position="425"/>
    </location>
</feature>
<keyword id="KW-0963">Cytoplasm</keyword>
<keyword id="KW-0312">Gluconeogenesis</keyword>
<keyword id="KW-0324">Glycolysis</keyword>
<keyword id="KW-0413">Isomerase</keyword>
<name>G6PI_LISIN</name>
<sequence>MTHIKFDYSKALRFFEERELDYLEPAVKAAHDSLHNGTGAGNDALGWINLPTDYDKEEFARIKKATEKIHSDSDVLIVIGIGGSYLGARAAIETLNHSFYNVLEKGARKTPQVFFAGNSISSSYLHDLIEVVGDRDFSVNVISKSGTTTEPAIAFRVFKELLIKKYGEEGAKKRIYATTDKAKGALKTLADNEGYETFVVPDDVGGRFSVLTAVGLLPIAVSGVDIDALMNGAAAASKDFDKPELKNNIAYQYAAARNVLYRKGKVTELLISYEPGLQYFNEWWKQLFGESEGKDKKGIYPSSANFSTDLHSIGQYIQDGRRNLFETVIKVDKPRHNLTINKEEVDLDGLNYLAGETVDFVNTKAFEGTLLAHTDGEVPNFVVEVPELDAYTFGYLVYFFEKAVAISGYLNGVNPFDQPGVEAYKANMFALLGKPGFEDKKAELEKRLND</sequence>
<reference key="1">
    <citation type="journal article" date="2001" name="Science">
        <title>Comparative genomics of Listeria species.</title>
        <authorList>
            <person name="Glaser P."/>
            <person name="Frangeul L."/>
            <person name="Buchrieser C."/>
            <person name="Rusniok C."/>
            <person name="Amend A."/>
            <person name="Baquero F."/>
            <person name="Berche P."/>
            <person name="Bloecker H."/>
            <person name="Brandt P."/>
            <person name="Chakraborty T."/>
            <person name="Charbit A."/>
            <person name="Chetouani F."/>
            <person name="Couve E."/>
            <person name="de Daruvar A."/>
            <person name="Dehoux P."/>
            <person name="Domann E."/>
            <person name="Dominguez-Bernal G."/>
            <person name="Duchaud E."/>
            <person name="Durant L."/>
            <person name="Dussurget O."/>
            <person name="Entian K.-D."/>
            <person name="Fsihi H."/>
            <person name="Garcia-del Portillo F."/>
            <person name="Garrido P."/>
            <person name="Gautier L."/>
            <person name="Goebel W."/>
            <person name="Gomez-Lopez N."/>
            <person name="Hain T."/>
            <person name="Hauf J."/>
            <person name="Jackson D."/>
            <person name="Jones L.-M."/>
            <person name="Kaerst U."/>
            <person name="Kreft J."/>
            <person name="Kuhn M."/>
            <person name="Kunst F."/>
            <person name="Kurapkat G."/>
            <person name="Madueno E."/>
            <person name="Maitournam A."/>
            <person name="Mata Vicente J."/>
            <person name="Ng E."/>
            <person name="Nedjari H."/>
            <person name="Nordsiek G."/>
            <person name="Novella S."/>
            <person name="de Pablos B."/>
            <person name="Perez-Diaz J.-C."/>
            <person name="Purcell R."/>
            <person name="Remmel B."/>
            <person name="Rose M."/>
            <person name="Schlueter T."/>
            <person name="Simoes N."/>
            <person name="Tierrez A."/>
            <person name="Vazquez-Boland J.-A."/>
            <person name="Voss H."/>
            <person name="Wehland J."/>
            <person name="Cossart P."/>
        </authorList>
    </citation>
    <scope>NUCLEOTIDE SEQUENCE [LARGE SCALE GENOMIC DNA]</scope>
    <source>
        <strain>ATCC BAA-680 / CLIP 11262</strain>
    </source>
</reference>
<evidence type="ECO:0000255" key="1">
    <source>
        <dbReference type="HAMAP-Rule" id="MF_00473"/>
    </source>
</evidence>
<proteinExistence type="inferred from homology"/>